<dbReference type="EMBL" id="CP000901">
    <property type="protein sequence ID" value="ABX86270.1"/>
    <property type="molecule type" value="Genomic_DNA"/>
</dbReference>
<dbReference type="RefSeq" id="WP_002208995.1">
    <property type="nucleotide sequence ID" value="NZ_CP009935.1"/>
</dbReference>
<dbReference type="SMR" id="A9R671"/>
<dbReference type="GeneID" id="96663527"/>
<dbReference type="KEGG" id="ypg:YpAngola_A0052"/>
<dbReference type="PATRIC" id="fig|349746.12.peg.995"/>
<dbReference type="GO" id="GO:0043590">
    <property type="term" value="C:bacterial nucleoid"/>
    <property type="evidence" value="ECO:0007669"/>
    <property type="project" value="UniProtKB-UniRule"/>
</dbReference>
<dbReference type="GO" id="GO:0005737">
    <property type="term" value="C:cytoplasm"/>
    <property type="evidence" value="ECO:0007669"/>
    <property type="project" value="UniProtKB-UniRule"/>
</dbReference>
<dbReference type="GO" id="GO:0003700">
    <property type="term" value="F:DNA-binding transcription factor activity"/>
    <property type="evidence" value="ECO:0007669"/>
    <property type="project" value="TreeGrafter"/>
</dbReference>
<dbReference type="GO" id="GO:0000976">
    <property type="term" value="F:transcription cis-regulatory region binding"/>
    <property type="evidence" value="ECO:0007669"/>
    <property type="project" value="TreeGrafter"/>
</dbReference>
<dbReference type="GO" id="GO:0051301">
    <property type="term" value="P:cell division"/>
    <property type="evidence" value="ECO:0007669"/>
    <property type="project" value="UniProtKB-KW"/>
</dbReference>
<dbReference type="GO" id="GO:0010974">
    <property type="term" value="P:negative regulation of division septum assembly"/>
    <property type="evidence" value="ECO:0007669"/>
    <property type="project" value="InterPro"/>
</dbReference>
<dbReference type="FunFam" id="1.10.357.10:FF:000002">
    <property type="entry name" value="Nucleoid occlusion factor SlmA"/>
    <property type="match status" value="1"/>
</dbReference>
<dbReference type="Gene3D" id="1.10.357.10">
    <property type="entry name" value="Tetracycline Repressor, domain 2"/>
    <property type="match status" value="1"/>
</dbReference>
<dbReference type="HAMAP" id="MF_01839">
    <property type="entry name" value="NO_factor_SlmA"/>
    <property type="match status" value="1"/>
</dbReference>
<dbReference type="InterPro" id="IPR023772">
    <property type="entry name" value="DNA-bd_HTH_TetR-type_CS"/>
</dbReference>
<dbReference type="InterPro" id="IPR009057">
    <property type="entry name" value="Homeodomain-like_sf"/>
</dbReference>
<dbReference type="InterPro" id="IPR050109">
    <property type="entry name" value="HTH-type_TetR-like_transc_reg"/>
</dbReference>
<dbReference type="InterPro" id="IPR001647">
    <property type="entry name" value="HTH_TetR"/>
</dbReference>
<dbReference type="InterPro" id="IPR023769">
    <property type="entry name" value="NO_SlmA"/>
</dbReference>
<dbReference type="InterPro" id="IPR054580">
    <property type="entry name" value="SlmA-like_C"/>
</dbReference>
<dbReference type="InterPro" id="IPR036271">
    <property type="entry name" value="Tet_transcr_reg_TetR-rel_C_sf"/>
</dbReference>
<dbReference type="NCBIfam" id="NF007015">
    <property type="entry name" value="PRK09480.1"/>
    <property type="match status" value="1"/>
</dbReference>
<dbReference type="PANTHER" id="PTHR30055">
    <property type="entry name" value="HTH-TYPE TRANSCRIPTIONAL REGULATOR RUTR"/>
    <property type="match status" value="1"/>
</dbReference>
<dbReference type="PANTHER" id="PTHR30055:SF183">
    <property type="entry name" value="NUCLEOID OCCLUSION FACTOR SLMA"/>
    <property type="match status" value="1"/>
</dbReference>
<dbReference type="Pfam" id="PF22276">
    <property type="entry name" value="SlmA-like_C"/>
    <property type="match status" value="1"/>
</dbReference>
<dbReference type="Pfam" id="PF00440">
    <property type="entry name" value="TetR_N"/>
    <property type="match status" value="1"/>
</dbReference>
<dbReference type="SUPFAM" id="SSF46689">
    <property type="entry name" value="Homeodomain-like"/>
    <property type="match status" value="1"/>
</dbReference>
<dbReference type="SUPFAM" id="SSF48498">
    <property type="entry name" value="Tetracyclin repressor-like, C-terminal domain"/>
    <property type="match status" value="1"/>
</dbReference>
<dbReference type="PROSITE" id="PS01081">
    <property type="entry name" value="HTH_TETR_1"/>
    <property type="match status" value="1"/>
</dbReference>
<dbReference type="PROSITE" id="PS50977">
    <property type="entry name" value="HTH_TETR_2"/>
    <property type="match status" value="1"/>
</dbReference>
<evidence type="ECO:0000255" key="1">
    <source>
        <dbReference type="HAMAP-Rule" id="MF_01839"/>
    </source>
</evidence>
<protein>
    <recommendedName>
        <fullName evidence="1">Nucleoid occlusion factor SlmA</fullName>
    </recommendedName>
</protein>
<proteinExistence type="inferred from homology"/>
<accession>A9R671</accession>
<name>SLMA_YERPG</name>
<organism>
    <name type="scientific">Yersinia pestis bv. Antiqua (strain Angola)</name>
    <dbReference type="NCBI Taxonomy" id="349746"/>
    <lineage>
        <taxon>Bacteria</taxon>
        <taxon>Pseudomonadati</taxon>
        <taxon>Pseudomonadota</taxon>
        <taxon>Gammaproteobacteria</taxon>
        <taxon>Enterobacterales</taxon>
        <taxon>Yersiniaceae</taxon>
        <taxon>Yersinia</taxon>
    </lineage>
</organism>
<gene>
    <name evidence="1" type="primary">slmA</name>
    <name type="ordered locus">YpAngola_A0052</name>
</gene>
<keyword id="KW-0131">Cell cycle</keyword>
<keyword id="KW-0132">Cell division</keyword>
<keyword id="KW-0175">Coiled coil</keyword>
<keyword id="KW-0963">Cytoplasm</keyword>
<keyword id="KW-0238">DNA-binding</keyword>
<reference key="1">
    <citation type="journal article" date="2010" name="J. Bacteriol.">
        <title>Genome sequence of the deep-rooted Yersinia pestis strain Angola reveals new insights into the evolution and pangenome of the plague bacterium.</title>
        <authorList>
            <person name="Eppinger M."/>
            <person name="Worsham P.L."/>
            <person name="Nikolich M.P."/>
            <person name="Riley D.R."/>
            <person name="Sebastian Y."/>
            <person name="Mou S."/>
            <person name="Achtman M."/>
            <person name="Lindler L.E."/>
            <person name="Ravel J."/>
        </authorList>
    </citation>
    <scope>NUCLEOTIDE SEQUENCE [LARGE SCALE GENOMIC DNA]</scope>
    <source>
        <strain>Angola</strain>
    </source>
</reference>
<feature type="chain" id="PRO_1000188409" description="Nucleoid occlusion factor SlmA">
    <location>
        <begin position="1"/>
        <end position="198"/>
    </location>
</feature>
<feature type="domain" description="HTH tetR-type" evidence="1">
    <location>
        <begin position="9"/>
        <end position="70"/>
    </location>
</feature>
<feature type="DNA-binding region" description="H-T-H motif" evidence="1">
    <location>
        <begin position="33"/>
        <end position="52"/>
    </location>
</feature>
<feature type="coiled-coil region" evidence="1">
    <location>
        <begin position="119"/>
        <end position="144"/>
    </location>
</feature>
<comment type="function">
    <text evidence="1">Required for nucleoid occlusion (NO) phenomenon, which prevents Z-ring formation and cell division over the nucleoid. Acts as a DNA-associated cell division inhibitor that binds simultaneously chromosomal DNA and FtsZ, and disrupts the assembly of FtsZ polymers. SlmA-DNA-binding sequences (SBS) are dispersed on non-Ter regions of the chromosome, preventing FtsZ polymerization at these regions.</text>
</comment>
<comment type="subunit">
    <text evidence="1">Homodimer. Interacts with FtsZ.</text>
</comment>
<comment type="subcellular location">
    <subcellularLocation>
        <location evidence="1">Cytoplasm</location>
        <location evidence="1">Nucleoid</location>
    </subcellularLocation>
</comment>
<comment type="similarity">
    <text evidence="1">Belongs to the nucleoid occlusion factor SlmA family.</text>
</comment>
<sequence>MAEKENTKRNRREEILQALAQMLESSDGSQRITTAKLAANVGVSEAALYRHFPSKTRMFDSLIEFIEDSLMSRINLILQDEKETFNRLRLILLLVLGFAERNPGLTRIMTGHALMFEQDRLQGRINQLFERIEMQLRQVLREKKLRDGQGFIHDEALLATQLLAFCEGMLSRFVRSEFRYCPTQEFDSRWPLIVAQLQ</sequence>